<sequence length="103" mass="11561">MYAVIVTGGKQYKVAEGEYLKIEKLEVATGESVTFDRVLLVANGDDVNIGAPVVAGATVKAEVISQGRHDKVRIIKFRRRKHHMKRMGHRQWFTEIKITGIQA</sequence>
<reference key="1">
    <citation type="journal article" date="2009" name="Genome Biol.">
        <title>Genomic and genetic analyses of diversity and plant interactions of Pseudomonas fluorescens.</title>
        <authorList>
            <person name="Silby M.W."/>
            <person name="Cerdeno-Tarraga A.M."/>
            <person name="Vernikos G.S."/>
            <person name="Giddens S.R."/>
            <person name="Jackson R.W."/>
            <person name="Preston G.M."/>
            <person name="Zhang X.-X."/>
            <person name="Moon C.D."/>
            <person name="Gehrig S.M."/>
            <person name="Godfrey S.A.C."/>
            <person name="Knight C.G."/>
            <person name="Malone J.G."/>
            <person name="Robinson Z."/>
            <person name="Spiers A.J."/>
            <person name="Harris S."/>
            <person name="Challis G.L."/>
            <person name="Yaxley A.M."/>
            <person name="Harris D."/>
            <person name="Seeger K."/>
            <person name="Murphy L."/>
            <person name="Rutter S."/>
            <person name="Squares R."/>
            <person name="Quail M.A."/>
            <person name="Saunders E."/>
            <person name="Mavromatis K."/>
            <person name="Brettin T.S."/>
            <person name="Bentley S.D."/>
            <person name="Hothersall J."/>
            <person name="Stephens E."/>
            <person name="Thomas C.M."/>
            <person name="Parkhill J."/>
            <person name="Levy S.B."/>
            <person name="Rainey P.B."/>
            <person name="Thomson N.R."/>
        </authorList>
    </citation>
    <scope>NUCLEOTIDE SEQUENCE [LARGE SCALE GENOMIC DNA]</scope>
    <source>
        <strain>Pf0-1</strain>
    </source>
</reference>
<evidence type="ECO:0000255" key="1">
    <source>
        <dbReference type="HAMAP-Rule" id="MF_01363"/>
    </source>
</evidence>
<evidence type="ECO:0000305" key="2"/>
<feature type="chain" id="PRO_0000270710" description="Large ribosomal subunit protein bL21">
    <location>
        <begin position="1"/>
        <end position="103"/>
    </location>
</feature>
<accession>Q3K6K7</accession>
<comment type="function">
    <text evidence="1">This protein binds to 23S rRNA in the presence of protein L20.</text>
</comment>
<comment type="subunit">
    <text evidence="1">Part of the 50S ribosomal subunit. Contacts protein L20.</text>
</comment>
<comment type="similarity">
    <text evidence="1">Belongs to the bacterial ribosomal protein bL21 family.</text>
</comment>
<dbReference type="EMBL" id="CP000094">
    <property type="protein sequence ID" value="ABA76597.1"/>
    <property type="molecule type" value="Genomic_DNA"/>
</dbReference>
<dbReference type="RefSeq" id="WP_003228361.1">
    <property type="nucleotide sequence ID" value="NC_007492.2"/>
</dbReference>
<dbReference type="SMR" id="Q3K6K7"/>
<dbReference type="GeneID" id="93491194"/>
<dbReference type="KEGG" id="pfo:Pfl01_4860"/>
<dbReference type="eggNOG" id="COG0261">
    <property type="taxonomic scope" value="Bacteria"/>
</dbReference>
<dbReference type="HOGENOM" id="CLU_061463_3_2_6"/>
<dbReference type="Proteomes" id="UP000002704">
    <property type="component" value="Chromosome"/>
</dbReference>
<dbReference type="GO" id="GO:0005737">
    <property type="term" value="C:cytoplasm"/>
    <property type="evidence" value="ECO:0007669"/>
    <property type="project" value="UniProtKB-ARBA"/>
</dbReference>
<dbReference type="GO" id="GO:1990904">
    <property type="term" value="C:ribonucleoprotein complex"/>
    <property type="evidence" value="ECO:0007669"/>
    <property type="project" value="UniProtKB-KW"/>
</dbReference>
<dbReference type="GO" id="GO:0005840">
    <property type="term" value="C:ribosome"/>
    <property type="evidence" value="ECO:0007669"/>
    <property type="project" value="UniProtKB-KW"/>
</dbReference>
<dbReference type="GO" id="GO:0019843">
    <property type="term" value="F:rRNA binding"/>
    <property type="evidence" value="ECO:0007669"/>
    <property type="project" value="UniProtKB-UniRule"/>
</dbReference>
<dbReference type="GO" id="GO:0003735">
    <property type="term" value="F:structural constituent of ribosome"/>
    <property type="evidence" value="ECO:0007669"/>
    <property type="project" value="InterPro"/>
</dbReference>
<dbReference type="GO" id="GO:0006412">
    <property type="term" value="P:translation"/>
    <property type="evidence" value="ECO:0007669"/>
    <property type="project" value="UniProtKB-UniRule"/>
</dbReference>
<dbReference type="HAMAP" id="MF_01363">
    <property type="entry name" value="Ribosomal_bL21"/>
    <property type="match status" value="1"/>
</dbReference>
<dbReference type="InterPro" id="IPR028909">
    <property type="entry name" value="bL21-like"/>
</dbReference>
<dbReference type="InterPro" id="IPR036164">
    <property type="entry name" value="bL21-like_sf"/>
</dbReference>
<dbReference type="InterPro" id="IPR001787">
    <property type="entry name" value="Ribosomal_bL21"/>
</dbReference>
<dbReference type="InterPro" id="IPR018258">
    <property type="entry name" value="Ribosomal_bL21_CS"/>
</dbReference>
<dbReference type="NCBIfam" id="TIGR00061">
    <property type="entry name" value="L21"/>
    <property type="match status" value="1"/>
</dbReference>
<dbReference type="PANTHER" id="PTHR21349">
    <property type="entry name" value="50S RIBOSOMAL PROTEIN L21"/>
    <property type="match status" value="1"/>
</dbReference>
<dbReference type="PANTHER" id="PTHR21349:SF0">
    <property type="entry name" value="LARGE RIBOSOMAL SUBUNIT PROTEIN BL21M"/>
    <property type="match status" value="1"/>
</dbReference>
<dbReference type="Pfam" id="PF00829">
    <property type="entry name" value="Ribosomal_L21p"/>
    <property type="match status" value="1"/>
</dbReference>
<dbReference type="SUPFAM" id="SSF141091">
    <property type="entry name" value="L21p-like"/>
    <property type="match status" value="1"/>
</dbReference>
<dbReference type="PROSITE" id="PS01169">
    <property type="entry name" value="RIBOSOMAL_L21"/>
    <property type="match status" value="1"/>
</dbReference>
<keyword id="KW-0687">Ribonucleoprotein</keyword>
<keyword id="KW-0689">Ribosomal protein</keyword>
<keyword id="KW-0694">RNA-binding</keyword>
<keyword id="KW-0699">rRNA-binding</keyword>
<proteinExistence type="inferred from homology"/>
<organism>
    <name type="scientific">Pseudomonas fluorescens (strain Pf0-1)</name>
    <dbReference type="NCBI Taxonomy" id="205922"/>
    <lineage>
        <taxon>Bacteria</taxon>
        <taxon>Pseudomonadati</taxon>
        <taxon>Pseudomonadota</taxon>
        <taxon>Gammaproteobacteria</taxon>
        <taxon>Pseudomonadales</taxon>
        <taxon>Pseudomonadaceae</taxon>
        <taxon>Pseudomonas</taxon>
    </lineage>
</organism>
<gene>
    <name evidence="1" type="primary">rplU</name>
    <name type="ordered locus">Pfl01_4860</name>
</gene>
<protein>
    <recommendedName>
        <fullName evidence="1">Large ribosomal subunit protein bL21</fullName>
    </recommendedName>
    <alternativeName>
        <fullName evidence="2">50S ribosomal protein L21</fullName>
    </alternativeName>
</protein>
<name>RL21_PSEPF</name>